<gene>
    <name evidence="1" type="primary">rsmH</name>
    <name type="synonym">mraW</name>
    <name type="ordered locus">RBE_0540</name>
</gene>
<feature type="chain" id="PRO_0000277934" description="Ribosomal RNA small subunit methyltransferase H">
    <location>
        <begin position="1"/>
        <end position="305"/>
    </location>
</feature>
<feature type="binding site" evidence="1">
    <location>
        <begin position="33"/>
        <end position="35"/>
    </location>
    <ligand>
        <name>S-adenosyl-L-methionine</name>
        <dbReference type="ChEBI" id="CHEBI:59789"/>
    </ligand>
</feature>
<feature type="binding site" evidence="1">
    <location>
        <position position="51"/>
    </location>
    <ligand>
        <name>S-adenosyl-L-methionine</name>
        <dbReference type="ChEBI" id="CHEBI:59789"/>
    </ligand>
</feature>
<feature type="binding site" evidence="1">
    <location>
        <position position="78"/>
    </location>
    <ligand>
        <name>S-adenosyl-L-methionine</name>
        <dbReference type="ChEBI" id="CHEBI:59789"/>
    </ligand>
</feature>
<feature type="binding site" evidence="1">
    <location>
        <position position="96"/>
    </location>
    <ligand>
        <name>S-adenosyl-L-methionine</name>
        <dbReference type="ChEBI" id="CHEBI:59789"/>
    </ligand>
</feature>
<feature type="binding site" evidence="1">
    <location>
        <position position="103"/>
    </location>
    <ligand>
        <name>S-adenosyl-L-methionine</name>
        <dbReference type="ChEBI" id="CHEBI:59789"/>
    </ligand>
</feature>
<reference key="1">
    <citation type="journal article" date="2006" name="PLoS Genet.">
        <title>Genome sequence of Rickettsia bellii illuminates the role of amoebae in gene exchanges between intracellular pathogens.</title>
        <authorList>
            <person name="Ogata H."/>
            <person name="La Scola B."/>
            <person name="Audic S."/>
            <person name="Renesto P."/>
            <person name="Blanc G."/>
            <person name="Robert C."/>
            <person name="Fournier P.-E."/>
            <person name="Claverie J.-M."/>
            <person name="Raoult D."/>
        </authorList>
    </citation>
    <scope>NUCLEOTIDE SEQUENCE [LARGE SCALE GENOMIC DNA]</scope>
    <source>
        <strain>RML369-C</strain>
    </source>
</reference>
<comment type="function">
    <text evidence="1">Specifically methylates the N4 position of cytidine in position 1402 (C1402) of 16S rRNA.</text>
</comment>
<comment type="catalytic activity">
    <reaction evidence="1">
        <text>cytidine(1402) in 16S rRNA + S-adenosyl-L-methionine = N(4)-methylcytidine(1402) in 16S rRNA + S-adenosyl-L-homocysteine + H(+)</text>
        <dbReference type="Rhea" id="RHEA:42928"/>
        <dbReference type="Rhea" id="RHEA-COMP:10286"/>
        <dbReference type="Rhea" id="RHEA-COMP:10287"/>
        <dbReference type="ChEBI" id="CHEBI:15378"/>
        <dbReference type="ChEBI" id="CHEBI:57856"/>
        <dbReference type="ChEBI" id="CHEBI:59789"/>
        <dbReference type="ChEBI" id="CHEBI:74506"/>
        <dbReference type="ChEBI" id="CHEBI:82748"/>
        <dbReference type="EC" id="2.1.1.199"/>
    </reaction>
</comment>
<comment type="subcellular location">
    <subcellularLocation>
        <location evidence="1">Cytoplasm</location>
    </subcellularLocation>
</comment>
<comment type="similarity">
    <text evidence="1">Belongs to the methyltransferase superfamily. RsmH family.</text>
</comment>
<evidence type="ECO:0000255" key="1">
    <source>
        <dbReference type="HAMAP-Rule" id="MF_01007"/>
    </source>
</evidence>
<protein>
    <recommendedName>
        <fullName evidence="1">Ribosomal RNA small subunit methyltransferase H</fullName>
        <ecNumber evidence="1">2.1.1.199</ecNumber>
    </recommendedName>
    <alternativeName>
        <fullName evidence="1">16S rRNA m(4)C1402 methyltransferase</fullName>
    </alternativeName>
    <alternativeName>
        <fullName evidence="1">rRNA (cytosine-N(4)-)-methyltransferase RsmH</fullName>
    </alternativeName>
</protein>
<accession>Q1RJ43</accession>
<name>RSMH_RICBR</name>
<proteinExistence type="inferred from homology"/>
<keyword id="KW-0963">Cytoplasm</keyword>
<keyword id="KW-0489">Methyltransferase</keyword>
<keyword id="KW-0698">rRNA processing</keyword>
<keyword id="KW-0949">S-adenosyl-L-methionine</keyword>
<keyword id="KW-0808">Transferase</keyword>
<dbReference type="EC" id="2.1.1.199" evidence="1"/>
<dbReference type="EMBL" id="CP000087">
    <property type="protein sequence ID" value="ABE04621.1"/>
    <property type="molecule type" value="Genomic_DNA"/>
</dbReference>
<dbReference type="RefSeq" id="WP_011477212.1">
    <property type="nucleotide sequence ID" value="NC_007940.1"/>
</dbReference>
<dbReference type="SMR" id="Q1RJ43"/>
<dbReference type="KEGG" id="rbe:RBE_0540"/>
<dbReference type="eggNOG" id="COG0275">
    <property type="taxonomic scope" value="Bacteria"/>
</dbReference>
<dbReference type="HOGENOM" id="CLU_038422_1_1_5"/>
<dbReference type="OrthoDB" id="9806637at2"/>
<dbReference type="Proteomes" id="UP000001951">
    <property type="component" value="Chromosome"/>
</dbReference>
<dbReference type="GO" id="GO:0005737">
    <property type="term" value="C:cytoplasm"/>
    <property type="evidence" value="ECO:0007669"/>
    <property type="project" value="UniProtKB-SubCell"/>
</dbReference>
<dbReference type="GO" id="GO:0071424">
    <property type="term" value="F:rRNA (cytosine-N4-)-methyltransferase activity"/>
    <property type="evidence" value="ECO:0007669"/>
    <property type="project" value="UniProtKB-UniRule"/>
</dbReference>
<dbReference type="GO" id="GO:0070475">
    <property type="term" value="P:rRNA base methylation"/>
    <property type="evidence" value="ECO:0007669"/>
    <property type="project" value="UniProtKB-UniRule"/>
</dbReference>
<dbReference type="CDD" id="cd02440">
    <property type="entry name" value="AdoMet_MTases"/>
    <property type="match status" value="1"/>
</dbReference>
<dbReference type="FunFam" id="1.10.150.170:FF:000003">
    <property type="entry name" value="Ribosomal RNA small subunit methyltransferase H"/>
    <property type="match status" value="1"/>
</dbReference>
<dbReference type="Gene3D" id="1.10.150.170">
    <property type="entry name" value="Putative methyltransferase TM0872, insert domain"/>
    <property type="match status" value="1"/>
</dbReference>
<dbReference type="Gene3D" id="3.40.50.150">
    <property type="entry name" value="Vaccinia Virus protein VP39"/>
    <property type="match status" value="1"/>
</dbReference>
<dbReference type="HAMAP" id="MF_01007">
    <property type="entry name" value="16SrRNA_methyltr_H"/>
    <property type="match status" value="1"/>
</dbReference>
<dbReference type="InterPro" id="IPR002903">
    <property type="entry name" value="RsmH"/>
</dbReference>
<dbReference type="InterPro" id="IPR023397">
    <property type="entry name" value="SAM-dep_MeTrfase_MraW_recog"/>
</dbReference>
<dbReference type="InterPro" id="IPR029063">
    <property type="entry name" value="SAM-dependent_MTases_sf"/>
</dbReference>
<dbReference type="NCBIfam" id="TIGR00006">
    <property type="entry name" value="16S rRNA (cytosine(1402)-N(4))-methyltransferase RsmH"/>
    <property type="match status" value="1"/>
</dbReference>
<dbReference type="PANTHER" id="PTHR11265:SF0">
    <property type="entry name" value="12S RRNA N4-METHYLCYTIDINE METHYLTRANSFERASE"/>
    <property type="match status" value="1"/>
</dbReference>
<dbReference type="PANTHER" id="PTHR11265">
    <property type="entry name" value="S-ADENOSYL-METHYLTRANSFERASE MRAW"/>
    <property type="match status" value="1"/>
</dbReference>
<dbReference type="Pfam" id="PF01795">
    <property type="entry name" value="Methyltransf_5"/>
    <property type="match status" value="1"/>
</dbReference>
<dbReference type="PIRSF" id="PIRSF004486">
    <property type="entry name" value="MraW"/>
    <property type="match status" value="1"/>
</dbReference>
<dbReference type="SUPFAM" id="SSF81799">
    <property type="entry name" value="Putative methyltransferase TM0872, insert domain"/>
    <property type="match status" value="1"/>
</dbReference>
<dbReference type="SUPFAM" id="SSF53335">
    <property type="entry name" value="S-adenosyl-L-methionine-dependent methyltransferases"/>
    <property type="match status" value="1"/>
</dbReference>
<organism>
    <name type="scientific">Rickettsia bellii (strain RML369-C)</name>
    <dbReference type="NCBI Taxonomy" id="336407"/>
    <lineage>
        <taxon>Bacteria</taxon>
        <taxon>Pseudomonadati</taxon>
        <taxon>Pseudomonadota</taxon>
        <taxon>Alphaproteobacteria</taxon>
        <taxon>Rickettsiales</taxon>
        <taxon>Rickettsiaceae</taxon>
        <taxon>Rickettsieae</taxon>
        <taxon>Rickettsia</taxon>
        <taxon>belli group</taxon>
    </lineage>
</organism>
<sequence length="305" mass="34557">MQQPHIPVMLNEMLKFLAPKAGESYLDCTFGAGGYSKALLENCDCYVTALDRDPNVIKKAEEIKHNYKDRFDFVETNFGNCFAKLESKKFDGIVLDLGVSSMQLDIPDRGFSFLHDGPLDMRMSGQGLSAEEFINTAEEKDLADVIYKYGDETFSRRIAKKIVEVRKAARIDSTGKLADIVRSCIGFRKGKIDPATKTFQAIRIYINNELGELEQFLANVKNILKKDGRLVVVSFHSLEDRIVKNFFKENSEKPVARSKYAKEDIMLNPDKWLKIITNKAEIPSDKEISLNVRARSAKLRAAKKI</sequence>